<gene>
    <name evidence="1" type="primary">rpiA</name>
    <name type="ordered locus">RPD_2055</name>
</gene>
<accession>Q139E9</accession>
<keyword id="KW-0413">Isomerase</keyword>
<evidence type="ECO:0000255" key="1">
    <source>
        <dbReference type="HAMAP-Rule" id="MF_00170"/>
    </source>
</evidence>
<sequence length="232" mass="24673">MDKEDLKRQAAARALEEVRSGMKLGLGTGSTARHFVELLGEKVRGGLDVIGVPTSEVTRADAERCGIRLTTLDEIDRLDLTVDGADEVDTRLELIKGGGGALLREKIVAAASDRMIVIADESKWVDCLGKFPLPVEVIPFGLAATRRAIEKAFTQVGAAGQLKLRDGEAGHAFVTDGGHWIVDAHLGRIPDAPRLAKLLSEIPGVVEHGLFIGIASTVVLAGTEGIRTVERA</sequence>
<comment type="function">
    <text evidence="1">Catalyzes the reversible conversion of ribose-5-phosphate to ribulose 5-phosphate.</text>
</comment>
<comment type="catalytic activity">
    <reaction evidence="1">
        <text>aldehydo-D-ribose 5-phosphate = D-ribulose 5-phosphate</text>
        <dbReference type="Rhea" id="RHEA:14657"/>
        <dbReference type="ChEBI" id="CHEBI:58121"/>
        <dbReference type="ChEBI" id="CHEBI:58273"/>
        <dbReference type="EC" id="5.3.1.6"/>
    </reaction>
</comment>
<comment type="pathway">
    <text evidence="1">Carbohydrate degradation; pentose phosphate pathway; D-ribose 5-phosphate from D-ribulose 5-phosphate (non-oxidative stage): step 1/1.</text>
</comment>
<comment type="subunit">
    <text evidence="1">Homodimer.</text>
</comment>
<comment type="similarity">
    <text evidence="1">Belongs to the ribose 5-phosphate isomerase family.</text>
</comment>
<reference key="1">
    <citation type="submission" date="2006-03" db="EMBL/GenBank/DDBJ databases">
        <title>Complete sequence of Rhodopseudomonas palustris BisB5.</title>
        <authorList>
            <consortium name="US DOE Joint Genome Institute"/>
            <person name="Copeland A."/>
            <person name="Lucas S."/>
            <person name="Lapidus A."/>
            <person name="Barry K."/>
            <person name="Detter J.C."/>
            <person name="Glavina del Rio T."/>
            <person name="Hammon N."/>
            <person name="Israni S."/>
            <person name="Dalin E."/>
            <person name="Tice H."/>
            <person name="Pitluck S."/>
            <person name="Chain P."/>
            <person name="Malfatti S."/>
            <person name="Shin M."/>
            <person name="Vergez L."/>
            <person name="Schmutz J."/>
            <person name="Larimer F."/>
            <person name="Land M."/>
            <person name="Hauser L."/>
            <person name="Pelletier D.A."/>
            <person name="Kyrpides N."/>
            <person name="Lykidis A."/>
            <person name="Oda Y."/>
            <person name="Harwood C.S."/>
            <person name="Richardson P."/>
        </authorList>
    </citation>
    <scope>NUCLEOTIDE SEQUENCE [LARGE SCALE GENOMIC DNA]</scope>
    <source>
        <strain>BisB5</strain>
    </source>
</reference>
<feature type="chain" id="PRO_1000016978" description="Ribose-5-phosphate isomerase A">
    <location>
        <begin position="1"/>
        <end position="232"/>
    </location>
</feature>
<feature type="active site" description="Proton acceptor" evidence="1">
    <location>
        <position position="105"/>
    </location>
</feature>
<feature type="binding site" evidence="1">
    <location>
        <begin position="28"/>
        <end position="31"/>
    </location>
    <ligand>
        <name>substrate</name>
    </ligand>
</feature>
<feature type="binding site" evidence="1">
    <location>
        <begin position="83"/>
        <end position="86"/>
    </location>
    <ligand>
        <name>substrate</name>
    </ligand>
</feature>
<feature type="binding site" evidence="1">
    <location>
        <begin position="96"/>
        <end position="99"/>
    </location>
    <ligand>
        <name>substrate</name>
    </ligand>
</feature>
<feature type="binding site" evidence="1">
    <location>
        <position position="123"/>
    </location>
    <ligand>
        <name>substrate</name>
    </ligand>
</feature>
<name>RPIA_RHOPS</name>
<protein>
    <recommendedName>
        <fullName evidence="1">Ribose-5-phosphate isomerase A</fullName>
        <ecNumber evidence="1">5.3.1.6</ecNumber>
    </recommendedName>
    <alternativeName>
        <fullName evidence="1">Phosphoriboisomerase A</fullName>
        <shortName evidence="1">PRI</shortName>
    </alternativeName>
</protein>
<dbReference type="EC" id="5.3.1.6" evidence="1"/>
<dbReference type="EMBL" id="CP000283">
    <property type="protein sequence ID" value="ABE39290.1"/>
    <property type="molecule type" value="Genomic_DNA"/>
</dbReference>
<dbReference type="SMR" id="Q139E9"/>
<dbReference type="STRING" id="316057.RPD_2055"/>
<dbReference type="KEGG" id="rpd:RPD_2055"/>
<dbReference type="eggNOG" id="COG0120">
    <property type="taxonomic scope" value="Bacteria"/>
</dbReference>
<dbReference type="HOGENOM" id="CLU_056590_1_0_5"/>
<dbReference type="BioCyc" id="RPAL316057:RPD_RS10315-MONOMER"/>
<dbReference type="UniPathway" id="UPA00115">
    <property type="reaction ID" value="UER00412"/>
</dbReference>
<dbReference type="Proteomes" id="UP000001818">
    <property type="component" value="Chromosome"/>
</dbReference>
<dbReference type="GO" id="GO:0004751">
    <property type="term" value="F:ribose-5-phosphate isomerase activity"/>
    <property type="evidence" value="ECO:0007669"/>
    <property type="project" value="UniProtKB-UniRule"/>
</dbReference>
<dbReference type="GO" id="GO:0009052">
    <property type="term" value="P:pentose-phosphate shunt, non-oxidative branch"/>
    <property type="evidence" value="ECO:0007669"/>
    <property type="project" value="UniProtKB-UniRule"/>
</dbReference>
<dbReference type="CDD" id="cd01398">
    <property type="entry name" value="RPI_A"/>
    <property type="match status" value="1"/>
</dbReference>
<dbReference type="FunFam" id="3.40.50.1360:FF:000001">
    <property type="entry name" value="Ribose-5-phosphate isomerase A"/>
    <property type="match status" value="1"/>
</dbReference>
<dbReference type="Gene3D" id="3.30.70.260">
    <property type="match status" value="1"/>
</dbReference>
<dbReference type="Gene3D" id="3.40.50.1360">
    <property type="match status" value="1"/>
</dbReference>
<dbReference type="HAMAP" id="MF_00170">
    <property type="entry name" value="Rib_5P_isom_A"/>
    <property type="match status" value="1"/>
</dbReference>
<dbReference type="InterPro" id="IPR037171">
    <property type="entry name" value="NagB/RpiA_transferase-like"/>
</dbReference>
<dbReference type="InterPro" id="IPR050262">
    <property type="entry name" value="Ribose-5P_isomerase"/>
</dbReference>
<dbReference type="InterPro" id="IPR020672">
    <property type="entry name" value="Ribose5P_isomerase_typA_subgr"/>
</dbReference>
<dbReference type="InterPro" id="IPR004788">
    <property type="entry name" value="Ribose5P_isomerase_type_A"/>
</dbReference>
<dbReference type="NCBIfam" id="NF001924">
    <property type="entry name" value="PRK00702.1"/>
    <property type="match status" value="1"/>
</dbReference>
<dbReference type="NCBIfam" id="TIGR00021">
    <property type="entry name" value="rpiA"/>
    <property type="match status" value="1"/>
</dbReference>
<dbReference type="PANTHER" id="PTHR43748">
    <property type="entry name" value="RIBOSE-5-PHOSPHATE ISOMERASE 3, CHLOROPLASTIC-RELATED"/>
    <property type="match status" value="1"/>
</dbReference>
<dbReference type="PANTHER" id="PTHR43748:SF3">
    <property type="entry name" value="RIBOSE-5-PHOSPHATE ISOMERASE 3, CHLOROPLASTIC-RELATED"/>
    <property type="match status" value="1"/>
</dbReference>
<dbReference type="Pfam" id="PF06026">
    <property type="entry name" value="Rib_5-P_isom_A"/>
    <property type="match status" value="1"/>
</dbReference>
<dbReference type="SUPFAM" id="SSF75445">
    <property type="entry name" value="D-ribose-5-phosphate isomerase (RpiA), lid domain"/>
    <property type="match status" value="1"/>
</dbReference>
<dbReference type="SUPFAM" id="SSF100950">
    <property type="entry name" value="NagB/RpiA/CoA transferase-like"/>
    <property type="match status" value="1"/>
</dbReference>
<proteinExistence type="inferred from homology"/>
<organism>
    <name type="scientific">Rhodopseudomonas palustris (strain BisB5)</name>
    <dbReference type="NCBI Taxonomy" id="316057"/>
    <lineage>
        <taxon>Bacteria</taxon>
        <taxon>Pseudomonadati</taxon>
        <taxon>Pseudomonadota</taxon>
        <taxon>Alphaproteobacteria</taxon>
        <taxon>Hyphomicrobiales</taxon>
        <taxon>Nitrobacteraceae</taxon>
        <taxon>Rhodopseudomonas</taxon>
    </lineage>
</organism>